<proteinExistence type="inferred from homology"/>
<gene>
    <name type="primary">ATTI2</name>
    <name type="ordered locus">At2g43520</name>
    <name type="ORF">T01O24.26</name>
</gene>
<feature type="signal peptide" evidence="2">
    <location>
        <begin position="1"/>
        <end position="27"/>
    </location>
</feature>
<feature type="chain" id="PRO_0000031094" description="Defensin-like protein 193">
    <location>
        <begin position="28"/>
        <end position="90"/>
    </location>
</feature>
<feature type="site" description="Reactive bond" evidence="1">
    <location>
        <begin position="48"/>
        <end position="49"/>
    </location>
</feature>
<feature type="disulfide bond" evidence="1">
    <location>
        <begin position="32"/>
        <end position="86"/>
    </location>
</feature>
<feature type="disulfide bond" evidence="1">
    <location>
        <begin position="45"/>
        <end position="69"/>
    </location>
</feature>
<feature type="disulfide bond" evidence="1">
    <location>
        <begin position="54"/>
        <end position="81"/>
    </location>
</feature>
<feature type="disulfide bond" evidence="1">
    <location>
        <begin position="58"/>
        <end position="83"/>
    </location>
</feature>
<feature type="sequence variant" description="In strain: cv. Sah-0.">
    <original>M</original>
    <variation>T</variation>
    <location>
        <position position="3"/>
    </location>
</feature>
<protein>
    <recommendedName>
        <fullName>Defensin-like protein 193</fullName>
    </recommendedName>
    <alternativeName>
        <fullName>Trypsin inhibitor ATTI-2</fullName>
    </alternativeName>
</protein>
<name>DF193_ARATH</name>
<reference key="1">
    <citation type="journal article" date="2004" name="Genetics">
        <title>Functional divergence in tandemly duplicated Arabidopsis thaliana trypsin inhibitor genes.</title>
        <authorList>
            <person name="Clauss M.J."/>
            <person name="Mitchell-Olds T."/>
        </authorList>
    </citation>
    <scope>NUCLEOTIDE SEQUENCE [GENOMIC DNA]</scope>
    <scope>GENE FAMILY</scope>
    <scope>NOMENCLATURE</scope>
    <source>
        <strain>cv. Col-1</strain>
        <strain>cv. Cvi-1</strain>
        <strain>cv. Di-0</strain>
        <strain>cv. Fe-1a</strain>
        <strain>cv. Goe-0</strain>
        <strain>cv. Ita-0</strain>
        <strain>cv. Kas-1</strain>
        <strain>cv. Landsberg erecta</strain>
        <strain>cv. Le-0</strain>
        <strain>cv. Nd-1</strain>
        <strain>cv. Nok-0</strain>
        <strain>cv. Rsch-0</strain>
        <strain>cv. Sah-0</strain>
        <strain>cv. Ta-0</strain>
        <strain>cv. Wassilewskija</strain>
        <strain>cv. Wei-0</strain>
        <strain>cv. Wil-2</strain>
        <tissue>Leaf</tissue>
    </source>
</reference>
<reference key="2">
    <citation type="journal article" date="1999" name="Nature">
        <title>Sequence and analysis of chromosome 2 of the plant Arabidopsis thaliana.</title>
        <authorList>
            <person name="Lin X."/>
            <person name="Kaul S."/>
            <person name="Rounsley S.D."/>
            <person name="Shea T.P."/>
            <person name="Benito M.-I."/>
            <person name="Town C.D."/>
            <person name="Fujii C.Y."/>
            <person name="Mason T.M."/>
            <person name="Bowman C.L."/>
            <person name="Barnstead M.E."/>
            <person name="Feldblyum T.V."/>
            <person name="Buell C.R."/>
            <person name="Ketchum K.A."/>
            <person name="Lee J.J."/>
            <person name="Ronning C.M."/>
            <person name="Koo H.L."/>
            <person name="Moffat K.S."/>
            <person name="Cronin L.A."/>
            <person name="Shen M."/>
            <person name="Pai G."/>
            <person name="Van Aken S."/>
            <person name="Umayam L."/>
            <person name="Tallon L.J."/>
            <person name="Gill J.E."/>
            <person name="Adams M.D."/>
            <person name="Carrera A.J."/>
            <person name="Creasy T.H."/>
            <person name="Goodman H.M."/>
            <person name="Somerville C.R."/>
            <person name="Copenhaver G.P."/>
            <person name="Preuss D."/>
            <person name="Nierman W.C."/>
            <person name="White O."/>
            <person name="Eisen J.A."/>
            <person name="Salzberg S.L."/>
            <person name="Fraser C.M."/>
            <person name="Venter J.C."/>
        </authorList>
    </citation>
    <scope>NUCLEOTIDE SEQUENCE [LARGE SCALE GENOMIC DNA]</scope>
    <source>
        <strain>cv. Columbia</strain>
    </source>
</reference>
<reference key="3">
    <citation type="journal article" date="2017" name="Plant J.">
        <title>Araport11: a complete reannotation of the Arabidopsis thaliana reference genome.</title>
        <authorList>
            <person name="Cheng C.Y."/>
            <person name="Krishnakumar V."/>
            <person name="Chan A.P."/>
            <person name="Thibaud-Nissen F."/>
            <person name="Schobel S."/>
            <person name="Town C.D."/>
        </authorList>
    </citation>
    <scope>GENOME REANNOTATION</scope>
    <source>
        <strain>cv. Columbia</strain>
    </source>
</reference>
<reference key="4">
    <citation type="submission" date="2004-09" db="EMBL/GenBank/DDBJ databases">
        <title>Large-scale analysis of RIKEN Arabidopsis full-length (RAFL) cDNAs.</title>
        <authorList>
            <person name="Totoki Y."/>
            <person name="Seki M."/>
            <person name="Ishida J."/>
            <person name="Nakajima M."/>
            <person name="Enju A."/>
            <person name="Kamiya A."/>
            <person name="Narusaka M."/>
            <person name="Shin-i T."/>
            <person name="Nakagawa M."/>
            <person name="Sakamoto N."/>
            <person name="Oishi K."/>
            <person name="Kohara Y."/>
            <person name="Kobayashi M."/>
            <person name="Toyoda A."/>
            <person name="Sakaki Y."/>
            <person name="Sakurai T."/>
            <person name="Iida K."/>
            <person name="Akiyama K."/>
            <person name="Satou M."/>
            <person name="Toyoda T."/>
            <person name="Konagaya A."/>
            <person name="Carninci P."/>
            <person name="Kawai J."/>
            <person name="Hayashizaki Y."/>
            <person name="Shinozaki K."/>
        </authorList>
    </citation>
    <scope>NUCLEOTIDE SEQUENCE [LARGE SCALE MRNA]</scope>
    <source>
        <strain>cv. Columbia</strain>
    </source>
</reference>
<reference key="5">
    <citation type="submission" date="2002-03" db="EMBL/GenBank/DDBJ databases">
        <title>Full-length cDNA from Arabidopsis thaliana.</title>
        <authorList>
            <person name="Brover V.V."/>
            <person name="Troukhan M.E."/>
            <person name="Alexandrov N.A."/>
            <person name="Lu Y.-P."/>
            <person name="Flavell R.B."/>
            <person name="Feldmann K.A."/>
        </authorList>
    </citation>
    <scope>NUCLEOTIDE SEQUENCE [LARGE SCALE MRNA]</scope>
</reference>
<reference key="6">
    <citation type="journal article" date="2005" name="Plant Physiol.">
        <title>Genome organization of more than 300 defensin-like genes in Arabidopsis.</title>
        <authorList>
            <person name="Silverstein K.A.T."/>
            <person name="Graham M.A."/>
            <person name="Paape T.D."/>
            <person name="VandenBosch K.A."/>
        </authorList>
    </citation>
    <scope>GENE FAMILY</scope>
</reference>
<keyword id="KW-0929">Antimicrobial</keyword>
<keyword id="KW-1015">Disulfide bond</keyword>
<keyword id="KW-0295">Fungicide</keyword>
<keyword id="KW-0611">Plant defense</keyword>
<keyword id="KW-1185">Reference proteome</keyword>
<keyword id="KW-0964">Secreted</keyword>
<keyword id="KW-0732">Signal</keyword>
<accession>O22866</accession>
<accession>Q67YC6</accession>
<accession>Q6ZZT9</accession>
<dbReference type="EMBL" id="AJ632250">
    <property type="protein sequence ID" value="CAG15156.1"/>
    <property type="molecule type" value="Genomic_DNA"/>
</dbReference>
<dbReference type="EMBL" id="AJ632251">
    <property type="protein sequence ID" value="CAG15161.1"/>
    <property type="molecule type" value="Genomic_DNA"/>
</dbReference>
<dbReference type="EMBL" id="AJ632252">
    <property type="protein sequence ID" value="CAG15166.1"/>
    <property type="molecule type" value="Genomic_DNA"/>
</dbReference>
<dbReference type="EMBL" id="AJ632253">
    <property type="protein sequence ID" value="CAG15171.1"/>
    <property type="molecule type" value="Genomic_DNA"/>
</dbReference>
<dbReference type="EMBL" id="AJ632254">
    <property type="protein sequence ID" value="CAG15176.1"/>
    <property type="molecule type" value="Genomic_DNA"/>
</dbReference>
<dbReference type="EMBL" id="AJ632255">
    <property type="protein sequence ID" value="CAG15182.1"/>
    <property type="molecule type" value="Genomic_DNA"/>
</dbReference>
<dbReference type="EMBL" id="AJ632256">
    <property type="protein sequence ID" value="CAG15188.1"/>
    <property type="molecule type" value="Genomic_DNA"/>
</dbReference>
<dbReference type="EMBL" id="AJ632257">
    <property type="protein sequence ID" value="CAG15194.1"/>
    <property type="molecule type" value="Genomic_DNA"/>
</dbReference>
<dbReference type="EMBL" id="AJ632258">
    <property type="protein sequence ID" value="CAG15199.1"/>
    <property type="molecule type" value="Genomic_DNA"/>
</dbReference>
<dbReference type="EMBL" id="AJ632259">
    <property type="protein sequence ID" value="CAG15204.1"/>
    <property type="molecule type" value="Genomic_DNA"/>
</dbReference>
<dbReference type="EMBL" id="AJ632260">
    <property type="protein sequence ID" value="CAG15209.1"/>
    <property type="molecule type" value="Genomic_DNA"/>
</dbReference>
<dbReference type="EMBL" id="AJ632261">
    <property type="protein sequence ID" value="CAG15214.1"/>
    <property type="molecule type" value="Genomic_DNA"/>
</dbReference>
<dbReference type="EMBL" id="AJ632262">
    <property type="protein sequence ID" value="CAG15219.1"/>
    <property type="molecule type" value="Genomic_DNA"/>
</dbReference>
<dbReference type="EMBL" id="AJ632263">
    <property type="protein sequence ID" value="CAG15224.1"/>
    <property type="molecule type" value="Genomic_DNA"/>
</dbReference>
<dbReference type="EMBL" id="AJ632264">
    <property type="protein sequence ID" value="CAG15229.1"/>
    <property type="molecule type" value="Genomic_DNA"/>
</dbReference>
<dbReference type="EMBL" id="AJ632265">
    <property type="protein sequence ID" value="CAG15234.1"/>
    <property type="molecule type" value="Genomic_DNA"/>
</dbReference>
<dbReference type="EMBL" id="AJ632266">
    <property type="protein sequence ID" value="CAG15239.1"/>
    <property type="molecule type" value="Genomic_DNA"/>
</dbReference>
<dbReference type="EMBL" id="AC002335">
    <property type="protein sequence ID" value="AAB64324.1"/>
    <property type="molecule type" value="Genomic_DNA"/>
</dbReference>
<dbReference type="EMBL" id="CP002685">
    <property type="protein sequence ID" value="AEC10285.1"/>
    <property type="molecule type" value="Genomic_DNA"/>
</dbReference>
<dbReference type="EMBL" id="AK175705">
    <property type="protein sequence ID" value="BAD43468.1"/>
    <property type="molecule type" value="mRNA"/>
</dbReference>
<dbReference type="EMBL" id="AK176542">
    <property type="protein sequence ID" value="BAD44305.1"/>
    <property type="molecule type" value="mRNA"/>
</dbReference>
<dbReference type="EMBL" id="AK176838">
    <property type="protein sequence ID" value="BAD44601.1"/>
    <property type="molecule type" value="mRNA"/>
</dbReference>
<dbReference type="EMBL" id="AY085600">
    <property type="protein sequence ID" value="AAM62821.1"/>
    <property type="molecule type" value="mRNA"/>
</dbReference>
<dbReference type="PIR" id="B84867">
    <property type="entry name" value="B84867"/>
</dbReference>
<dbReference type="RefSeq" id="NP_181880.1">
    <property type="nucleotide sequence ID" value="NM_129913.3"/>
</dbReference>
<dbReference type="SMR" id="O22866"/>
<dbReference type="FunCoup" id="O22866">
    <property type="interactions" value="23"/>
</dbReference>
<dbReference type="STRING" id="3702.O22866"/>
<dbReference type="PaxDb" id="3702-AT2G43520.1"/>
<dbReference type="ProteomicsDB" id="224184"/>
<dbReference type="EnsemblPlants" id="AT2G43520.1">
    <property type="protein sequence ID" value="AT2G43520.1"/>
    <property type="gene ID" value="AT2G43520"/>
</dbReference>
<dbReference type="GeneID" id="818953"/>
<dbReference type="Gramene" id="AT2G43520.1">
    <property type="protein sequence ID" value="AT2G43520.1"/>
    <property type="gene ID" value="AT2G43520"/>
</dbReference>
<dbReference type="KEGG" id="ath:AT2G43520"/>
<dbReference type="Araport" id="AT2G43520"/>
<dbReference type="TAIR" id="AT2G43520">
    <property type="gene designation" value="TI2"/>
</dbReference>
<dbReference type="HOGENOM" id="CLU_181760_0_0_1"/>
<dbReference type="InParanoid" id="O22866"/>
<dbReference type="OMA" id="TICYIRC"/>
<dbReference type="OrthoDB" id="1052518at2759"/>
<dbReference type="PhylomeDB" id="O22866"/>
<dbReference type="PRO" id="PR:O22866"/>
<dbReference type="Proteomes" id="UP000006548">
    <property type="component" value="Chromosome 2"/>
</dbReference>
<dbReference type="ExpressionAtlas" id="O22866">
    <property type="expression patterns" value="baseline and differential"/>
</dbReference>
<dbReference type="GO" id="GO:0005576">
    <property type="term" value="C:extracellular region"/>
    <property type="evidence" value="ECO:0007669"/>
    <property type="project" value="UniProtKB-SubCell"/>
</dbReference>
<dbReference type="GO" id="GO:0004867">
    <property type="term" value="F:serine-type endopeptidase inhibitor activity"/>
    <property type="evidence" value="ECO:0000250"/>
    <property type="project" value="TAIR"/>
</dbReference>
<dbReference type="GO" id="GO:0019871">
    <property type="term" value="F:sodium channel inhibitor activity"/>
    <property type="evidence" value="ECO:0007669"/>
    <property type="project" value="InterPro"/>
</dbReference>
<dbReference type="GO" id="GO:0006952">
    <property type="term" value="P:defense response"/>
    <property type="evidence" value="ECO:0000304"/>
    <property type="project" value="TAIR"/>
</dbReference>
<dbReference type="GO" id="GO:0050832">
    <property type="term" value="P:defense response to fungus"/>
    <property type="evidence" value="ECO:0007669"/>
    <property type="project" value="UniProtKB-KW"/>
</dbReference>
<dbReference type="GO" id="GO:0031640">
    <property type="term" value="P:killing of cells of another organism"/>
    <property type="evidence" value="ECO:0007669"/>
    <property type="project" value="UniProtKB-KW"/>
</dbReference>
<dbReference type="Gene3D" id="3.30.30.10">
    <property type="entry name" value="Knottin, scorpion toxin-like"/>
    <property type="match status" value="1"/>
</dbReference>
<dbReference type="InterPro" id="IPR003614">
    <property type="entry name" value="Scorpion_toxin-like"/>
</dbReference>
<dbReference type="InterPro" id="IPR036574">
    <property type="entry name" value="Scorpion_toxin-like_sf"/>
</dbReference>
<dbReference type="InterPro" id="IPR002061">
    <property type="entry name" value="Scorpion_toxinL/defensin"/>
</dbReference>
<dbReference type="Pfam" id="PF00537">
    <property type="entry name" value="Toxin_3"/>
    <property type="match status" value="1"/>
</dbReference>
<dbReference type="SMART" id="SM00505">
    <property type="entry name" value="Knot1"/>
    <property type="match status" value="1"/>
</dbReference>
<dbReference type="SUPFAM" id="SSF57095">
    <property type="entry name" value="Scorpion toxin-like"/>
    <property type="match status" value="1"/>
</dbReference>
<sequence>MAMKSVSTLAVFAILFLVIVEMPEIKAQGSKCLKEYGGNVGFSYCAPRIFPSFCYRNCRKNKGAKGGRCRSGGAGAGSMICLCDYCSDKP</sequence>
<comment type="subcellular location">
    <subcellularLocation>
        <location evidence="1">Secreted</location>
    </subcellularLocation>
</comment>
<comment type="similarity">
    <text evidence="3">Belongs to the DEFL family. Protease inhibitor I18 (RTI/MTI-2) subfamily.</text>
</comment>
<comment type="caution">
    <text evidence="4">Was initially thought to be a protease inhibitor.</text>
</comment>
<evidence type="ECO:0000250" key="1"/>
<evidence type="ECO:0000255" key="2"/>
<evidence type="ECO:0000305" key="3"/>
<evidence type="ECO:0000305" key="4">
    <source>
    </source>
</evidence>
<organism>
    <name type="scientific">Arabidopsis thaliana</name>
    <name type="common">Mouse-ear cress</name>
    <dbReference type="NCBI Taxonomy" id="3702"/>
    <lineage>
        <taxon>Eukaryota</taxon>
        <taxon>Viridiplantae</taxon>
        <taxon>Streptophyta</taxon>
        <taxon>Embryophyta</taxon>
        <taxon>Tracheophyta</taxon>
        <taxon>Spermatophyta</taxon>
        <taxon>Magnoliopsida</taxon>
        <taxon>eudicotyledons</taxon>
        <taxon>Gunneridae</taxon>
        <taxon>Pentapetalae</taxon>
        <taxon>rosids</taxon>
        <taxon>malvids</taxon>
        <taxon>Brassicales</taxon>
        <taxon>Brassicaceae</taxon>
        <taxon>Camelineae</taxon>
        <taxon>Arabidopsis</taxon>
    </lineage>
</organism>